<reference key="1">
    <citation type="journal article" date="2004" name="Nat. Genet.">
        <title>Complete sequencing and characterization of 21,243 full-length human cDNAs.</title>
        <authorList>
            <person name="Ota T."/>
            <person name="Suzuki Y."/>
            <person name="Nishikawa T."/>
            <person name="Otsuki T."/>
            <person name="Sugiyama T."/>
            <person name="Irie R."/>
            <person name="Wakamatsu A."/>
            <person name="Hayashi K."/>
            <person name="Sato H."/>
            <person name="Nagai K."/>
            <person name="Kimura K."/>
            <person name="Makita H."/>
            <person name="Sekine M."/>
            <person name="Obayashi M."/>
            <person name="Nishi T."/>
            <person name="Shibahara T."/>
            <person name="Tanaka T."/>
            <person name="Ishii S."/>
            <person name="Yamamoto J."/>
            <person name="Saito K."/>
            <person name="Kawai Y."/>
            <person name="Isono Y."/>
            <person name="Nakamura Y."/>
            <person name="Nagahari K."/>
            <person name="Murakami K."/>
            <person name="Yasuda T."/>
            <person name="Iwayanagi T."/>
            <person name="Wagatsuma M."/>
            <person name="Shiratori A."/>
            <person name="Sudo H."/>
            <person name="Hosoiri T."/>
            <person name="Kaku Y."/>
            <person name="Kodaira H."/>
            <person name="Kondo H."/>
            <person name="Sugawara M."/>
            <person name="Takahashi M."/>
            <person name="Kanda K."/>
            <person name="Yokoi T."/>
            <person name="Furuya T."/>
            <person name="Kikkawa E."/>
            <person name="Omura Y."/>
            <person name="Abe K."/>
            <person name="Kamihara K."/>
            <person name="Katsuta N."/>
            <person name="Sato K."/>
            <person name="Tanikawa M."/>
            <person name="Yamazaki M."/>
            <person name="Ninomiya K."/>
            <person name="Ishibashi T."/>
            <person name="Yamashita H."/>
            <person name="Murakawa K."/>
            <person name="Fujimori K."/>
            <person name="Tanai H."/>
            <person name="Kimata M."/>
            <person name="Watanabe M."/>
            <person name="Hiraoka S."/>
            <person name="Chiba Y."/>
            <person name="Ishida S."/>
            <person name="Ono Y."/>
            <person name="Takiguchi S."/>
            <person name="Watanabe S."/>
            <person name="Yosida M."/>
            <person name="Hotuta T."/>
            <person name="Kusano J."/>
            <person name="Kanehori K."/>
            <person name="Takahashi-Fujii A."/>
            <person name="Hara H."/>
            <person name="Tanase T.-O."/>
            <person name="Nomura Y."/>
            <person name="Togiya S."/>
            <person name="Komai F."/>
            <person name="Hara R."/>
            <person name="Takeuchi K."/>
            <person name="Arita M."/>
            <person name="Imose N."/>
            <person name="Musashino K."/>
            <person name="Yuuki H."/>
            <person name="Oshima A."/>
            <person name="Sasaki N."/>
            <person name="Aotsuka S."/>
            <person name="Yoshikawa Y."/>
            <person name="Matsunawa H."/>
            <person name="Ichihara T."/>
            <person name="Shiohata N."/>
            <person name="Sano S."/>
            <person name="Moriya S."/>
            <person name="Momiyama H."/>
            <person name="Satoh N."/>
            <person name="Takami S."/>
            <person name="Terashima Y."/>
            <person name="Suzuki O."/>
            <person name="Nakagawa S."/>
            <person name="Senoh A."/>
            <person name="Mizoguchi H."/>
            <person name="Goto Y."/>
            <person name="Shimizu F."/>
            <person name="Wakebe H."/>
            <person name="Hishigaki H."/>
            <person name="Watanabe T."/>
            <person name="Sugiyama A."/>
            <person name="Takemoto M."/>
            <person name="Kawakami B."/>
            <person name="Yamazaki M."/>
            <person name="Watanabe K."/>
            <person name="Kumagai A."/>
            <person name="Itakura S."/>
            <person name="Fukuzumi Y."/>
            <person name="Fujimori Y."/>
            <person name="Komiyama M."/>
            <person name="Tashiro H."/>
            <person name="Tanigami A."/>
            <person name="Fujiwara T."/>
            <person name="Ono T."/>
            <person name="Yamada K."/>
            <person name="Fujii Y."/>
            <person name="Ozaki K."/>
            <person name="Hirao M."/>
            <person name="Ohmori Y."/>
            <person name="Kawabata A."/>
            <person name="Hikiji T."/>
            <person name="Kobatake N."/>
            <person name="Inagaki H."/>
            <person name="Ikema Y."/>
            <person name="Okamoto S."/>
            <person name="Okitani R."/>
            <person name="Kawakami T."/>
            <person name="Noguchi S."/>
            <person name="Itoh T."/>
            <person name="Shigeta K."/>
            <person name="Senba T."/>
            <person name="Matsumura K."/>
            <person name="Nakajima Y."/>
            <person name="Mizuno T."/>
            <person name="Morinaga M."/>
            <person name="Sasaki M."/>
            <person name="Togashi T."/>
            <person name="Oyama M."/>
            <person name="Hata H."/>
            <person name="Watanabe M."/>
            <person name="Komatsu T."/>
            <person name="Mizushima-Sugano J."/>
            <person name="Satoh T."/>
            <person name="Shirai Y."/>
            <person name="Takahashi Y."/>
            <person name="Nakagawa K."/>
            <person name="Okumura K."/>
            <person name="Nagase T."/>
            <person name="Nomura N."/>
            <person name="Kikuchi H."/>
            <person name="Masuho Y."/>
            <person name="Yamashita R."/>
            <person name="Nakai K."/>
            <person name="Yada T."/>
            <person name="Nakamura Y."/>
            <person name="Ohara O."/>
            <person name="Isogai T."/>
            <person name="Sugano S."/>
        </authorList>
    </citation>
    <scope>NUCLEOTIDE SEQUENCE [LARGE SCALE MRNA] (ISOFORMS 1 AND 2)</scope>
    <source>
        <tissue>Testis</tissue>
    </source>
</reference>
<reference key="2">
    <citation type="journal article" date="2007" name="BMC Genomics">
        <title>The full-ORF clone resource of the German cDNA consortium.</title>
        <authorList>
            <person name="Bechtel S."/>
            <person name="Rosenfelder H."/>
            <person name="Duda A."/>
            <person name="Schmidt C.P."/>
            <person name="Ernst U."/>
            <person name="Wellenreuther R."/>
            <person name="Mehrle A."/>
            <person name="Schuster C."/>
            <person name="Bahr A."/>
            <person name="Bloecker H."/>
            <person name="Heubner D."/>
            <person name="Hoerlein A."/>
            <person name="Michel G."/>
            <person name="Wedler H."/>
            <person name="Koehrer K."/>
            <person name="Ottenwaelder B."/>
            <person name="Poustka A."/>
            <person name="Wiemann S."/>
            <person name="Schupp I."/>
        </authorList>
    </citation>
    <scope>NUCLEOTIDE SEQUENCE [LARGE SCALE MRNA] (ISOFORM 1)</scope>
    <source>
        <tissue>Testis</tissue>
    </source>
</reference>
<reference key="3">
    <citation type="journal article" date="2006" name="Nature">
        <title>DNA sequence and analysis of human chromosome 8.</title>
        <authorList>
            <person name="Nusbaum C."/>
            <person name="Mikkelsen T.S."/>
            <person name="Zody M.C."/>
            <person name="Asakawa S."/>
            <person name="Taudien S."/>
            <person name="Garber M."/>
            <person name="Kodira C.D."/>
            <person name="Schueler M.G."/>
            <person name="Shimizu A."/>
            <person name="Whittaker C.A."/>
            <person name="Chang J.L."/>
            <person name="Cuomo C.A."/>
            <person name="Dewar K."/>
            <person name="FitzGerald M.G."/>
            <person name="Yang X."/>
            <person name="Allen N.R."/>
            <person name="Anderson S."/>
            <person name="Asakawa T."/>
            <person name="Blechschmidt K."/>
            <person name="Bloom T."/>
            <person name="Borowsky M.L."/>
            <person name="Butler J."/>
            <person name="Cook A."/>
            <person name="Corum B."/>
            <person name="DeArellano K."/>
            <person name="DeCaprio D."/>
            <person name="Dooley K.T."/>
            <person name="Dorris L. III"/>
            <person name="Engels R."/>
            <person name="Gloeckner G."/>
            <person name="Hafez N."/>
            <person name="Hagopian D.S."/>
            <person name="Hall J.L."/>
            <person name="Ishikawa S.K."/>
            <person name="Jaffe D.B."/>
            <person name="Kamat A."/>
            <person name="Kudoh J."/>
            <person name="Lehmann R."/>
            <person name="Lokitsang T."/>
            <person name="Macdonald P."/>
            <person name="Major J.E."/>
            <person name="Matthews C.D."/>
            <person name="Mauceli E."/>
            <person name="Menzel U."/>
            <person name="Mihalev A.H."/>
            <person name="Minoshima S."/>
            <person name="Murayama Y."/>
            <person name="Naylor J.W."/>
            <person name="Nicol R."/>
            <person name="Nguyen C."/>
            <person name="O'Leary S.B."/>
            <person name="O'Neill K."/>
            <person name="Parker S.C.J."/>
            <person name="Polley A."/>
            <person name="Raymond C.K."/>
            <person name="Reichwald K."/>
            <person name="Rodriguez J."/>
            <person name="Sasaki T."/>
            <person name="Schilhabel M."/>
            <person name="Siddiqui R."/>
            <person name="Smith C.L."/>
            <person name="Sneddon T.P."/>
            <person name="Talamas J.A."/>
            <person name="Tenzin P."/>
            <person name="Topham K."/>
            <person name="Venkataraman V."/>
            <person name="Wen G."/>
            <person name="Yamazaki S."/>
            <person name="Young S.K."/>
            <person name="Zeng Q."/>
            <person name="Zimmer A.R."/>
            <person name="Rosenthal A."/>
            <person name="Birren B.W."/>
            <person name="Platzer M."/>
            <person name="Shimizu N."/>
            <person name="Lander E.S."/>
        </authorList>
    </citation>
    <scope>NUCLEOTIDE SEQUENCE [LARGE SCALE GENOMIC DNA]</scope>
</reference>
<reference key="4">
    <citation type="submission" date="2005-09" db="EMBL/GenBank/DDBJ databases">
        <authorList>
            <person name="Mural R.J."/>
            <person name="Istrail S."/>
            <person name="Sutton G.G."/>
            <person name="Florea L."/>
            <person name="Halpern A.L."/>
            <person name="Mobarry C.M."/>
            <person name="Lippert R."/>
            <person name="Walenz B."/>
            <person name="Shatkay H."/>
            <person name="Dew I."/>
            <person name="Miller J.R."/>
            <person name="Flanigan M.J."/>
            <person name="Edwards N.J."/>
            <person name="Bolanos R."/>
            <person name="Fasulo D."/>
            <person name="Halldorsson B.V."/>
            <person name="Hannenhalli S."/>
            <person name="Turner R."/>
            <person name="Yooseph S."/>
            <person name="Lu F."/>
            <person name="Nusskern D.R."/>
            <person name="Shue B.C."/>
            <person name="Zheng X.H."/>
            <person name="Zhong F."/>
            <person name="Delcher A.L."/>
            <person name="Huson D.H."/>
            <person name="Kravitz S.A."/>
            <person name="Mouchard L."/>
            <person name="Reinert K."/>
            <person name="Remington K.A."/>
            <person name="Clark A.G."/>
            <person name="Waterman M.S."/>
            <person name="Eichler E.E."/>
            <person name="Adams M.D."/>
            <person name="Hunkapiller M.W."/>
            <person name="Myers E.W."/>
            <person name="Venter J.C."/>
        </authorList>
    </citation>
    <scope>NUCLEOTIDE SEQUENCE [LARGE SCALE GENOMIC DNA]</scope>
</reference>
<reference key="5">
    <citation type="journal article" date="2004" name="Genome Res.">
        <title>The status, quality, and expansion of the NIH full-length cDNA project: the Mammalian Gene Collection (MGC).</title>
        <authorList>
            <consortium name="The MGC Project Team"/>
        </authorList>
    </citation>
    <scope>NUCLEOTIDE SEQUENCE [LARGE SCALE MRNA] (ISOFORM 1)</scope>
    <source>
        <tissue>Lymph</tissue>
        <tissue>Ovary</tissue>
    </source>
</reference>
<reference key="6">
    <citation type="journal article" date="2006" name="Biochem. J.">
        <title>CHMP7, a novel ESCRT-III-related protein, associates with CHMP4b and functions in the endosomal sorting pathway.</title>
        <authorList>
            <person name="Horii M."/>
            <person name="Shibata H."/>
            <person name="Kobayashi R."/>
            <person name="Katoh K."/>
            <person name="Yorikawa C."/>
            <person name="Yasuda J."/>
            <person name="Maki M."/>
        </authorList>
    </citation>
    <scope>FUNCTION</scope>
    <scope>SUBCELLULAR LOCATION</scope>
    <scope>INTERACTION WITH CHMP4B</scope>
</reference>
<reference key="7">
    <citation type="journal article" date="2006" name="Nat. Biotechnol.">
        <title>A probability-based approach for high-throughput protein phosphorylation analysis and site localization.</title>
        <authorList>
            <person name="Beausoleil S.A."/>
            <person name="Villen J."/>
            <person name="Gerber S.A."/>
            <person name="Rush J."/>
            <person name="Gygi S.P."/>
        </authorList>
    </citation>
    <scope>PHOSPHORYLATION [LARGE SCALE ANALYSIS] AT SER-417</scope>
    <scope>IDENTIFICATION BY MASS SPECTROMETRY [LARGE SCALE ANALYSIS]</scope>
    <source>
        <tissue>Cervix carcinoma</tissue>
    </source>
</reference>
<reference key="8">
    <citation type="journal article" date="2008" name="Proc. Natl. Acad. Sci. U.S.A.">
        <title>A quantitative atlas of mitotic phosphorylation.</title>
        <authorList>
            <person name="Dephoure N."/>
            <person name="Zhou C."/>
            <person name="Villen J."/>
            <person name="Beausoleil S.A."/>
            <person name="Bakalarski C.E."/>
            <person name="Elledge S.J."/>
            <person name="Gygi S.P."/>
        </authorList>
    </citation>
    <scope>IDENTIFICATION BY MASS SPECTROMETRY [LARGE SCALE ANALYSIS]</scope>
    <source>
        <tissue>Cervix carcinoma</tissue>
    </source>
</reference>
<reference key="9">
    <citation type="journal article" date="2009" name="Sci. Signal.">
        <title>Quantitative phosphoproteomic analysis of T cell receptor signaling reveals system-wide modulation of protein-protein interactions.</title>
        <authorList>
            <person name="Mayya V."/>
            <person name="Lundgren D.H."/>
            <person name="Hwang S.-I."/>
            <person name="Rezaul K."/>
            <person name="Wu L."/>
            <person name="Eng J.K."/>
            <person name="Rodionov V."/>
            <person name="Han D.K."/>
        </authorList>
    </citation>
    <scope>PHOSPHORYLATION [LARGE SCALE ANALYSIS] AT SER-417</scope>
    <scope>IDENTIFICATION BY MASS SPECTROMETRY [LARGE SCALE ANALYSIS]</scope>
    <source>
        <tissue>Leukemic T-cell</tissue>
    </source>
</reference>
<reference key="10">
    <citation type="journal article" date="2010" name="Sci. Signal.">
        <title>Quantitative phosphoproteomics reveals widespread full phosphorylation site occupancy during mitosis.</title>
        <authorList>
            <person name="Olsen J.V."/>
            <person name="Vermeulen M."/>
            <person name="Santamaria A."/>
            <person name="Kumar C."/>
            <person name="Miller M.L."/>
            <person name="Jensen L.J."/>
            <person name="Gnad F."/>
            <person name="Cox J."/>
            <person name="Jensen T.S."/>
            <person name="Nigg E.A."/>
            <person name="Brunak S."/>
            <person name="Mann M."/>
        </authorList>
    </citation>
    <scope>PHOSPHORYLATION [LARGE SCALE ANALYSIS] AT SER-417</scope>
    <scope>IDENTIFICATION BY MASS SPECTROMETRY [LARGE SCALE ANALYSIS]</scope>
    <source>
        <tissue>Cervix carcinoma</tissue>
    </source>
</reference>
<reference key="11">
    <citation type="journal article" date="2011" name="BMC Syst. Biol.">
        <title>Initial characterization of the human central proteome.</title>
        <authorList>
            <person name="Burkard T.R."/>
            <person name="Planyavsky M."/>
            <person name="Kaupe I."/>
            <person name="Breitwieser F.P."/>
            <person name="Buerckstuemmer T."/>
            <person name="Bennett K.L."/>
            <person name="Superti-Furga G."/>
            <person name="Colinge J."/>
        </authorList>
    </citation>
    <scope>IDENTIFICATION BY MASS SPECTROMETRY [LARGE SCALE ANALYSIS]</scope>
</reference>
<reference key="12">
    <citation type="journal article" date="2011" name="Sci. Signal.">
        <title>System-wide temporal characterization of the proteome and phosphoproteome of human embryonic stem cell differentiation.</title>
        <authorList>
            <person name="Rigbolt K.T."/>
            <person name="Prokhorova T.A."/>
            <person name="Akimov V."/>
            <person name="Henningsen J."/>
            <person name="Johansen P.T."/>
            <person name="Kratchmarova I."/>
            <person name="Kassem M."/>
            <person name="Mann M."/>
            <person name="Olsen J.V."/>
            <person name="Blagoev B."/>
        </authorList>
    </citation>
    <scope>PHOSPHORYLATION [LARGE SCALE ANALYSIS] AT SER-417</scope>
    <scope>IDENTIFICATION BY MASS SPECTROMETRY [LARGE SCALE ANALYSIS]</scope>
</reference>
<reference key="13">
    <citation type="journal article" date="2013" name="J. Proteome Res.">
        <title>Toward a comprehensive characterization of a human cancer cell phosphoproteome.</title>
        <authorList>
            <person name="Zhou H."/>
            <person name="Di Palma S."/>
            <person name="Preisinger C."/>
            <person name="Peng M."/>
            <person name="Polat A.N."/>
            <person name="Heck A.J."/>
            <person name="Mohammed S."/>
        </authorList>
    </citation>
    <scope>PHOSPHORYLATION [LARGE SCALE ANALYSIS] AT THR-408; SER-410; SER-417; SER-431 AND SER-441</scope>
    <scope>IDENTIFICATION BY MASS SPECTROMETRY [LARGE SCALE ANALYSIS]</scope>
    <source>
        <tissue>Cervix carcinoma</tissue>
        <tissue>Erythroleukemia</tissue>
    </source>
</reference>
<reference key="14">
    <citation type="journal article" date="2015" name="Nature">
        <title>Spastin and ESCRT-III coordinate mitotic spindle disassembly and nuclear envelope sealing.</title>
        <authorList>
            <person name="Vietri M."/>
            <person name="Schink K.O."/>
            <person name="Campsteijn C."/>
            <person name="Wegner C.S."/>
            <person name="Schultz S.W."/>
            <person name="Christ L."/>
            <person name="Thoresen S.B."/>
            <person name="Brech A."/>
            <person name="Raiborg C."/>
            <person name="Stenmark H."/>
        </authorList>
    </citation>
    <scope>FUNCTION</scope>
    <scope>SUBCELLULAR LOCATION</scope>
</reference>
<reference key="15">
    <citation type="journal article" date="2017" name="Proc. Natl. Acad. Sci. U.S.A.">
        <title>LEM2 recruits CHMP7 for ESCRT-mediated nuclear envelope closure in fission yeast and human cells.</title>
        <authorList>
            <person name="Gu M."/>
            <person name="LaJoie D."/>
            <person name="Chen O.S."/>
            <person name="von Appen A."/>
            <person name="Ladinsky M.S."/>
            <person name="Redd M.J."/>
            <person name="Nikolova L."/>
            <person name="Bjorkman P.J."/>
            <person name="Sundquist W.I."/>
            <person name="Ullman K.S."/>
            <person name="Frost A."/>
        </authorList>
    </citation>
    <scope>FUNCTION</scope>
    <scope>SUBCELLULAR LOCATION</scope>
    <scope>INTERACTION WITH LEMD2</scope>
</reference>
<keyword id="KW-0025">Alternative splicing</keyword>
<keyword id="KW-0175">Coiled coil</keyword>
<keyword id="KW-0963">Cytoplasm</keyword>
<keyword id="KW-0539">Nucleus</keyword>
<keyword id="KW-0597">Phosphoprotein</keyword>
<keyword id="KW-0653">Protein transport</keyword>
<keyword id="KW-1267">Proteomics identification</keyword>
<keyword id="KW-1185">Reference proteome</keyword>
<keyword id="KW-0813">Transport</keyword>
<proteinExistence type="evidence at protein level"/>
<sequence length="453" mass="50911">MWSPEREAEAPAGGDPAGLLPPEWEEDEERMSFLFSAFKRSREVNSTDWDSKMGFWAPLVLSHSRRQGVVRLRLRDLQEAFQRKGSVPLGLATVLQDLLRRGELQRESDFMASVDSSWISWGVGVFLLKPLKWTLSNMLGDNKVPAEEVLVAVELLKEKAEEVYRLYQNSPLSSHPVVALSELSTLCANSCPDERTFYLVLLQLQKEKRVTVLEQNGEKIVKFARGPRAKVSPVNDVDVGVYQLMQSEQLLSRKVESLSQEAERCKEEARRACRAGKKQLALRSLKAKQRTEKRIEALHAKLDTVQGILDRIYASQTDQMVFNAYQAGVGALKLSMKDVTVEKAESLVDQIQELCDTQDEVSQTLAGGVTNGLDFDSEELEKELDILLQDTTKEPLDLPDNPRNRHFTNSVPNPRISDAELEAELEKLSLSEGGLVPSSKSPKRQLEPTLKPL</sequence>
<comment type="function">
    <text evidence="4 5 6">ESCRT-III-like protein required to recruit the ESCRT-III complex to the nuclear envelope (NE) during late anaphase (PubMed:26040712). Together with SPAST, the ESCRT-III complex promotes NE sealing and mitotic spindle disassembly during late anaphase (PubMed:26040712, PubMed:28242692). Recruited to the reforming NE during anaphase by LEMD2 (PubMed:28242692). Plays a role in the endosomal sorting pathway (PubMed:16856878).</text>
</comment>
<comment type="subunit">
    <text evidence="4 6">Interacts with CHMP4B, but not with VPS25 (PubMed:16856878). Interacts with LEMD2 (via C-terminus) (PubMed:28242692).</text>
</comment>
<comment type="interaction">
    <interactant intactId="EBI-749253">
        <id>Q8WUX9</id>
    </interactant>
    <interactant intactId="EBI-718729">
        <id>P55212</id>
        <label>CASP6</label>
    </interactant>
    <organismsDiffer>false</organismsDiffer>
    <experiments>3</experiments>
</comment>
<comment type="interaction">
    <interactant intactId="EBI-749253">
        <id>Q8WUX9</id>
    </interactant>
    <interactant intactId="EBI-6624398">
        <id>P06307</id>
        <label>CCK</label>
    </interactant>
    <organismsDiffer>false</organismsDiffer>
    <experiments>3</experiments>
</comment>
<comment type="interaction">
    <interactant intactId="EBI-749253">
        <id>Q8WUX9</id>
    </interactant>
    <interactant intactId="EBI-25837549">
        <id>P28329-3</id>
        <label>CHAT</label>
    </interactant>
    <organismsDiffer>false</organismsDiffer>
    <experiments>3</experiments>
</comment>
<comment type="interaction">
    <interactant intactId="EBI-749253">
        <id>Q8WUX9</id>
    </interactant>
    <interactant intactId="EBI-749627">
        <id>Q9H444</id>
        <label>CHMP4B</label>
    </interactant>
    <organismsDiffer>false</organismsDiffer>
    <experiments>3</experiments>
</comment>
<comment type="interaction">
    <interactant intactId="EBI-749253">
        <id>Q8WUX9</id>
    </interactant>
    <interactant intactId="EBI-10976677">
        <id>G5E9A7</id>
        <label>DMWD</label>
    </interactant>
    <organismsDiffer>false</organismsDiffer>
    <experiments>3</experiments>
</comment>
<comment type="interaction">
    <interactant intactId="EBI-749253">
        <id>Q8WUX9</id>
    </interactant>
    <interactant intactId="EBI-395638">
        <id>O14645</id>
        <label>DNALI1</label>
    </interactant>
    <organismsDiffer>false</organismsDiffer>
    <experiments>3</experiments>
</comment>
<comment type="interaction">
    <interactant intactId="EBI-749253">
        <id>Q8WUX9</id>
    </interactant>
    <interactant intactId="EBI-348399">
        <id>P22607</id>
        <label>FGFR3</label>
    </interactant>
    <organismsDiffer>false</organismsDiffer>
    <experiments>3</experiments>
</comment>
<comment type="interaction">
    <interactant intactId="EBI-749253">
        <id>Q8WUX9</id>
    </interactant>
    <interactant intactId="EBI-10226858">
        <id>Q0VDC6</id>
        <label>FKBP1A</label>
    </interactant>
    <organismsDiffer>false</organismsDiffer>
    <experiments>3</experiments>
</comment>
<comment type="interaction">
    <interactant intactId="EBI-749253">
        <id>Q8WUX9</id>
    </interactant>
    <interactant intactId="EBI-8285963">
        <id>Q14957</id>
        <label>GRIN2C</label>
    </interactant>
    <organismsDiffer>false</organismsDiffer>
    <experiments>3</experiments>
</comment>
<comment type="interaction">
    <interactant intactId="EBI-749253">
        <id>Q8WUX9</id>
    </interactant>
    <interactant intactId="EBI-351506">
        <id>P06396</id>
        <label>GSN</label>
    </interactant>
    <organismsDiffer>false</organismsDiffer>
    <experiments>3</experiments>
</comment>
<comment type="interaction">
    <interactant intactId="EBI-749253">
        <id>Q8WUX9</id>
    </interactant>
    <interactant intactId="EBI-350145">
        <id>P01112</id>
        <label>HRAS</label>
    </interactant>
    <organismsDiffer>false</organismsDiffer>
    <experiments>4</experiments>
</comment>
<comment type="interaction">
    <interactant intactId="EBI-749253">
        <id>Q8WUX9</id>
    </interactant>
    <interactant intactId="EBI-356991">
        <id>P54652</id>
        <label>HSPA2</label>
    </interactant>
    <organismsDiffer>false</organismsDiffer>
    <experiments>3</experiments>
</comment>
<comment type="interaction">
    <interactant intactId="EBI-749253">
        <id>Q8WUX9</id>
    </interactant>
    <interactant intactId="EBI-948266">
        <id>O14901</id>
        <label>KLF11</label>
    </interactant>
    <organismsDiffer>false</organismsDiffer>
    <experiments>3</experiments>
</comment>
<comment type="interaction">
    <interactant intactId="EBI-749253">
        <id>Q8WUX9</id>
    </interactant>
    <interactant intactId="EBI-21591415">
        <id>P13473-2</id>
        <label>LAMP2</label>
    </interactant>
    <organismsDiffer>false</organismsDiffer>
    <experiments>3</experiments>
</comment>
<comment type="interaction">
    <interactant intactId="EBI-749253">
        <id>Q8WUX9</id>
    </interactant>
    <interactant intactId="EBI-2811583">
        <id>Q9BVL2</id>
        <label>NUP58</label>
    </interactant>
    <organismsDiffer>false</organismsDiffer>
    <experiments>3</experiments>
</comment>
<comment type="interaction">
    <interactant intactId="EBI-749253">
        <id>Q8WUX9</id>
    </interactant>
    <interactant intactId="EBI-50433196">
        <id>A0A6Q8PF08</id>
        <label>PMP22</label>
    </interactant>
    <organismsDiffer>false</organismsDiffer>
    <experiments>3</experiments>
</comment>
<comment type="interaction">
    <interactant intactId="EBI-749253">
        <id>Q8WUX9</id>
    </interactant>
    <interactant intactId="EBI-286642">
        <id>P62826</id>
        <label>RAN</label>
    </interactant>
    <organismsDiffer>false</organismsDiffer>
    <experiments>3</experiments>
</comment>
<comment type="interaction">
    <interactant intactId="EBI-749253">
        <id>Q8WUX9</id>
    </interactant>
    <interactant intactId="EBI-5235340">
        <id>Q7Z699</id>
        <label>SPRED1</label>
    </interactant>
    <organismsDiffer>false</organismsDiffer>
    <experiments>3</experiments>
</comment>
<comment type="interaction">
    <interactant intactId="EBI-749253">
        <id>Q8WUX9</id>
    </interactant>
    <interactant intactId="EBI-741480">
        <id>Q9UMX0</id>
        <label>UBQLN1</label>
    </interactant>
    <organismsDiffer>false</organismsDiffer>
    <experiments>3</experiments>
</comment>
<comment type="subcellular location">
    <subcellularLocation>
        <location evidence="4">Cytoplasm</location>
    </subcellularLocation>
    <subcellularLocation>
        <location evidence="5">Nucleus envelope</location>
    </subcellularLocation>
    <subcellularLocation>
        <location evidence="6">Nucleus envelope</location>
    </subcellularLocation>
    <text evidence="4 5 6">Diffused localization, with some punctate distribution, especially in the perinuclear area (PubMed:16856878). Localizes to the reforming nuclear envelope on chromatin disks during late anaphase (PubMed:26040712, PubMed:28242692).</text>
</comment>
<comment type="alternative products">
    <event type="alternative splicing"/>
    <isoform>
        <id>Q8WUX9-1</id>
        <name>1</name>
        <sequence type="displayed"/>
    </isoform>
    <isoform>
        <id>Q8WUX9-2</id>
        <name>2</name>
        <sequence type="described" ref="VSP_056945 VSP_056946"/>
    </isoform>
</comment>
<comment type="similarity">
    <text evidence="8">Belongs to the SNF7 family.</text>
</comment>
<dbReference type="EMBL" id="AK296592">
    <property type="protein sequence ID" value="BAG59208.1"/>
    <property type="molecule type" value="mRNA"/>
</dbReference>
<dbReference type="EMBL" id="AK315664">
    <property type="protein sequence ID" value="BAG38030.1"/>
    <property type="molecule type" value="mRNA"/>
</dbReference>
<dbReference type="EMBL" id="AL833843">
    <property type="protein sequence ID" value="CAD38703.2"/>
    <property type="molecule type" value="mRNA"/>
</dbReference>
<dbReference type="EMBL" id="AC100861">
    <property type="status" value="NOT_ANNOTATED_CDS"/>
    <property type="molecule type" value="Genomic_DNA"/>
</dbReference>
<dbReference type="EMBL" id="CH471080">
    <property type="protein sequence ID" value="EAW63632.1"/>
    <property type="molecule type" value="Genomic_DNA"/>
</dbReference>
<dbReference type="EMBL" id="CH471080">
    <property type="protein sequence ID" value="EAW63634.1"/>
    <property type="molecule type" value="Genomic_DNA"/>
</dbReference>
<dbReference type="EMBL" id="BC004344">
    <property type="protein sequence ID" value="AAH04344.1"/>
    <property type="molecule type" value="mRNA"/>
</dbReference>
<dbReference type="EMBL" id="BC019110">
    <property type="protein sequence ID" value="AAH19110.1"/>
    <property type="molecule type" value="mRNA"/>
</dbReference>
<dbReference type="EMBL" id="BC042050">
    <property type="protein sequence ID" value="AAH42050.1"/>
    <property type="molecule type" value="mRNA"/>
</dbReference>
<dbReference type="CCDS" id="CCDS6040.1">
    <molecule id="Q8WUX9-1"/>
</dbReference>
<dbReference type="RefSeq" id="NP_689485.1">
    <molecule id="Q8WUX9-1"/>
    <property type="nucleotide sequence ID" value="NM_152272.5"/>
</dbReference>
<dbReference type="SMR" id="Q8WUX9"/>
<dbReference type="BioGRID" id="124879">
    <property type="interactions" value="90"/>
</dbReference>
<dbReference type="ComplexPortal" id="CPX-329">
    <property type="entry name" value="ESCRT-III complex"/>
</dbReference>
<dbReference type="FunCoup" id="Q8WUX9">
    <property type="interactions" value="2592"/>
</dbReference>
<dbReference type="IntAct" id="Q8WUX9">
    <property type="interactions" value="32"/>
</dbReference>
<dbReference type="MINT" id="Q8WUX9"/>
<dbReference type="STRING" id="9606.ENSP00000380794"/>
<dbReference type="GlyGen" id="Q8WUX9">
    <property type="glycosylation" value="1 site, 1 N-linked glycan (1 site)"/>
</dbReference>
<dbReference type="iPTMnet" id="Q8WUX9"/>
<dbReference type="MetOSite" id="Q8WUX9"/>
<dbReference type="PhosphoSitePlus" id="Q8WUX9"/>
<dbReference type="BioMuta" id="CHMP7"/>
<dbReference type="DMDM" id="73917782"/>
<dbReference type="jPOST" id="Q8WUX9"/>
<dbReference type="MassIVE" id="Q8WUX9"/>
<dbReference type="PaxDb" id="9606-ENSP00000380794"/>
<dbReference type="PeptideAtlas" id="Q8WUX9"/>
<dbReference type="ProteomicsDB" id="4465"/>
<dbReference type="ProteomicsDB" id="74719">
    <molecule id="Q8WUX9-1"/>
</dbReference>
<dbReference type="Pumba" id="Q8WUX9"/>
<dbReference type="Antibodypedia" id="22730">
    <property type="antibodies" value="76 antibodies from 19 providers"/>
</dbReference>
<dbReference type="DNASU" id="91782"/>
<dbReference type="Ensembl" id="ENST00000313219.8">
    <molecule id="Q8WUX9-1"/>
    <property type="protein sequence ID" value="ENSP00000324491.7"/>
    <property type="gene ID" value="ENSG00000147457.14"/>
</dbReference>
<dbReference type="Ensembl" id="ENST00000397677.6">
    <molecule id="Q8WUX9-1"/>
    <property type="protein sequence ID" value="ENSP00000380794.1"/>
    <property type="gene ID" value="ENSG00000147457.14"/>
</dbReference>
<dbReference type="Ensembl" id="ENST00000519503.5">
    <molecule id="Q8WUX9-2"/>
    <property type="protein sequence ID" value="ENSP00000427948.1"/>
    <property type="gene ID" value="ENSG00000147457.14"/>
</dbReference>
<dbReference type="GeneID" id="91782"/>
<dbReference type="KEGG" id="hsa:91782"/>
<dbReference type="MANE-Select" id="ENST00000397677.6">
    <property type="protein sequence ID" value="ENSP00000380794.1"/>
    <property type="RefSeq nucleotide sequence ID" value="NM_152272.5"/>
    <property type="RefSeq protein sequence ID" value="NP_689485.1"/>
</dbReference>
<dbReference type="UCSC" id="uc003xdc.3">
    <molecule id="Q8WUX9-1"/>
    <property type="organism name" value="human"/>
</dbReference>
<dbReference type="AGR" id="HGNC:28439"/>
<dbReference type="CTD" id="91782"/>
<dbReference type="DisGeNET" id="91782"/>
<dbReference type="GeneCards" id="CHMP7"/>
<dbReference type="HGNC" id="HGNC:28439">
    <property type="gene designation" value="CHMP7"/>
</dbReference>
<dbReference type="HPA" id="ENSG00000147457">
    <property type="expression patterns" value="Tissue enhanced (lymphoid)"/>
</dbReference>
<dbReference type="MIM" id="611130">
    <property type="type" value="gene"/>
</dbReference>
<dbReference type="neXtProt" id="NX_Q8WUX9"/>
<dbReference type="OpenTargets" id="ENSG00000147457"/>
<dbReference type="PharmGKB" id="PA142672115"/>
<dbReference type="VEuPathDB" id="HostDB:ENSG00000147457"/>
<dbReference type="eggNOG" id="KOG2911">
    <property type="taxonomic scope" value="Eukaryota"/>
</dbReference>
<dbReference type="GeneTree" id="ENSGT00720000108860"/>
<dbReference type="HOGENOM" id="CLU_044768_0_0_1"/>
<dbReference type="InParanoid" id="Q8WUX9"/>
<dbReference type="OMA" id="LQLQFMR"/>
<dbReference type="OrthoDB" id="10250120at2759"/>
<dbReference type="PAN-GO" id="Q8WUX9">
    <property type="GO annotations" value="3 GO annotations based on evolutionary models"/>
</dbReference>
<dbReference type="PhylomeDB" id="Q8WUX9"/>
<dbReference type="TreeFam" id="TF312851"/>
<dbReference type="PathwayCommons" id="Q8WUX9"/>
<dbReference type="Reactome" id="R-HSA-162588">
    <property type="pathway name" value="Budding and maturation of HIV virion"/>
</dbReference>
<dbReference type="Reactome" id="R-HSA-1632852">
    <property type="pathway name" value="Macroautophagy"/>
</dbReference>
<dbReference type="Reactome" id="R-HSA-5620971">
    <property type="pathway name" value="Pyroptosis"/>
</dbReference>
<dbReference type="Reactome" id="R-HSA-917729">
    <property type="pathway name" value="Endosomal Sorting Complex Required For Transport (ESCRT)"/>
</dbReference>
<dbReference type="Reactome" id="R-HSA-9610379">
    <property type="pathway name" value="HCMV Late Events"/>
</dbReference>
<dbReference type="Reactome" id="R-HSA-9615710">
    <property type="pathway name" value="Late endosomal microautophagy"/>
</dbReference>
<dbReference type="Reactome" id="R-HSA-9668328">
    <property type="pathway name" value="Sealing of the nuclear envelope (NE) by ESCRT-III"/>
</dbReference>
<dbReference type="Reactome" id="R-HSA-9679504">
    <property type="pathway name" value="Translation of Replicase and Assembly of the Replication Transcription Complex"/>
</dbReference>
<dbReference type="Reactome" id="R-HSA-9694676">
    <property type="pathway name" value="Translation of Replicase and Assembly of the Replication Transcription Complex"/>
</dbReference>
<dbReference type="SignaLink" id="Q8WUX9"/>
<dbReference type="SIGNOR" id="Q8WUX9"/>
<dbReference type="BioGRID-ORCS" id="91782">
    <property type="hits" value="560 hits in 1169 CRISPR screens"/>
</dbReference>
<dbReference type="CD-CODE" id="38BEFE36">
    <property type="entry name" value="Synthetic Condensate 000277"/>
</dbReference>
<dbReference type="ChiTaRS" id="CHMP7">
    <property type="organism name" value="human"/>
</dbReference>
<dbReference type="GenomeRNAi" id="91782"/>
<dbReference type="Pharos" id="Q8WUX9">
    <property type="development level" value="Tbio"/>
</dbReference>
<dbReference type="PRO" id="PR:Q8WUX9"/>
<dbReference type="Proteomes" id="UP000005640">
    <property type="component" value="Chromosome 8"/>
</dbReference>
<dbReference type="RNAct" id="Q8WUX9">
    <property type="molecule type" value="protein"/>
</dbReference>
<dbReference type="Bgee" id="ENSG00000147457">
    <property type="expression patterns" value="Expressed in lymph node and 205 other cell types or tissues"/>
</dbReference>
<dbReference type="ExpressionAtlas" id="Q8WUX9">
    <property type="expression patterns" value="baseline and differential"/>
</dbReference>
<dbReference type="GO" id="GO:1904930">
    <property type="term" value="C:amphisome membrane"/>
    <property type="evidence" value="ECO:0000314"/>
    <property type="project" value="ComplexPortal"/>
</dbReference>
<dbReference type="GO" id="GO:0000421">
    <property type="term" value="C:autophagosome membrane"/>
    <property type="evidence" value="ECO:0000314"/>
    <property type="project" value="ComplexPortal"/>
</dbReference>
<dbReference type="GO" id="GO:0000785">
    <property type="term" value="C:chromatin"/>
    <property type="evidence" value="ECO:0000314"/>
    <property type="project" value="ARUK-UCL"/>
</dbReference>
<dbReference type="GO" id="GO:0009898">
    <property type="term" value="C:cytoplasmic side of plasma membrane"/>
    <property type="evidence" value="ECO:0000318"/>
    <property type="project" value="GO_Central"/>
</dbReference>
<dbReference type="GO" id="GO:0005829">
    <property type="term" value="C:cytosol"/>
    <property type="evidence" value="ECO:0000314"/>
    <property type="project" value="HPA"/>
</dbReference>
<dbReference type="GO" id="GO:0000815">
    <property type="term" value="C:ESCRT III complex"/>
    <property type="evidence" value="ECO:0000314"/>
    <property type="project" value="UniProtKB"/>
</dbReference>
<dbReference type="GO" id="GO:0000776">
    <property type="term" value="C:kinetochore"/>
    <property type="evidence" value="ECO:0000314"/>
    <property type="project" value="ComplexPortal"/>
</dbReference>
<dbReference type="GO" id="GO:0005828">
    <property type="term" value="C:kinetochore microtubule"/>
    <property type="evidence" value="ECO:0000314"/>
    <property type="project" value="ComplexPortal"/>
</dbReference>
<dbReference type="GO" id="GO:0005765">
    <property type="term" value="C:lysosomal membrane"/>
    <property type="evidence" value="ECO:0000314"/>
    <property type="project" value="ComplexPortal"/>
</dbReference>
<dbReference type="GO" id="GO:0030496">
    <property type="term" value="C:midbody"/>
    <property type="evidence" value="ECO:0000314"/>
    <property type="project" value="ComplexPortal"/>
</dbReference>
<dbReference type="GO" id="GO:0005771">
    <property type="term" value="C:multivesicular body"/>
    <property type="evidence" value="ECO:0000318"/>
    <property type="project" value="GO_Central"/>
</dbReference>
<dbReference type="GO" id="GO:0032585">
    <property type="term" value="C:multivesicular body membrane"/>
    <property type="evidence" value="ECO:0000314"/>
    <property type="project" value="ComplexPortal"/>
</dbReference>
<dbReference type="GO" id="GO:0005635">
    <property type="term" value="C:nuclear envelope"/>
    <property type="evidence" value="ECO:0000314"/>
    <property type="project" value="UniProtKB"/>
</dbReference>
<dbReference type="GO" id="GO:0005643">
    <property type="term" value="C:nuclear pore"/>
    <property type="evidence" value="ECO:0000314"/>
    <property type="project" value="ComplexPortal"/>
</dbReference>
<dbReference type="GO" id="GO:0005654">
    <property type="term" value="C:nucleoplasm"/>
    <property type="evidence" value="ECO:0000314"/>
    <property type="project" value="HPA"/>
</dbReference>
<dbReference type="GO" id="GO:0005886">
    <property type="term" value="C:plasma membrane"/>
    <property type="evidence" value="ECO:0000314"/>
    <property type="project" value="ComplexPortal"/>
</dbReference>
<dbReference type="GO" id="GO:0097352">
    <property type="term" value="P:autophagosome maturation"/>
    <property type="evidence" value="ECO:0000315"/>
    <property type="project" value="ComplexPortal"/>
</dbReference>
<dbReference type="GO" id="GO:0006914">
    <property type="term" value="P:autophagy"/>
    <property type="evidence" value="ECO:0000315"/>
    <property type="project" value="ComplexPortal"/>
</dbReference>
<dbReference type="GO" id="GO:1904903">
    <property type="term" value="P:ESCRT III complex disassembly"/>
    <property type="evidence" value="ECO:0000303"/>
    <property type="project" value="ParkinsonsUK-UCL"/>
</dbReference>
<dbReference type="GO" id="GO:0010458">
    <property type="term" value="P:exit from mitosis"/>
    <property type="evidence" value="ECO:0000315"/>
    <property type="project" value="UniProtKB"/>
</dbReference>
<dbReference type="GO" id="GO:1902774">
    <property type="term" value="P:late endosome to lysosome transport"/>
    <property type="evidence" value="ECO:0000315"/>
    <property type="project" value="ComplexPortal"/>
</dbReference>
<dbReference type="GO" id="GO:0045324">
    <property type="term" value="P:late endosome to vacuole transport"/>
    <property type="evidence" value="ECO:0000315"/>
    <property type="project" value="UniProtKB"/>
</dbReference>
<dbReference type="GO" id="GO:0032511">
    <property type="term" value="P:late endosome to vacuole transport via multivesicular body sorting pathway"/>
    <property type="evidence" value="ECO:0000318"/>
    <property type="project" value="GO_Central"/>
</dbReference>
<dbReference type="GO" id="GO:0090148">
    <property type="term" value="P:membrane fission"/>
    <property type="evidence" value="ECO:0000303"/>
    <property type="project" value="ComplexPortal"/>
</dbReference>
<dbReference type="GO" id="GO:0061952">
    <property type="term" value="P:midbody abscission"/>
    <property type="evidence" value="ECO:0000315"/>
    <property type="project" value="UniProtKB"/>
</dbReference>
<dbReference type="GO" id="GO:0007080">
    <property type="term" value="P:mitotic metaphase chromosome alignment"/>
    <property type="evidence" value="ECO:0000315"/>
    <property type="project" value="UniProtKB"/>
</dbReference>
<dbReference type="GO" id="GO:0036258">
    <property type="term" value="P:multivesicular body assembly"/>
    <property type="evidence" value="ECO:0000303"/>
    <property type="project" value="ParkinsonsUK-UCL"/>
</dbReference>
<dbReference type="GO" id="GO:0071985">
    <property type="term" value="P:multivesicular body sorting pathway"/>
    <property type="evidence" value="ECO:0000314"/>
    <property type="project" value="ComplexPortal"/>
</dbReference>
<dbReference type="GO" id="GO:0061763">
    <property type="term" value="P:multivesicular body-lysosome fusion"/>
    <property type="evidence" value="ECO:0000303"/>
    <property type="project" value="ComplexPortal"/>
</dbReference>
<dbReference type="GO" id="GO:0031468">
    <property type="term" value="P:nuclear membrane reassembly"/>
    <property type="evidence" value="ECO:0000315"/>
    <property type="project" value="UniProtKB"/>
</dbReference>
<dbReference type="GO" id="GO:0006997">
    <property type="term" value="P:nucleus organization"/>
    <property type="evidence" value="ECO:0000315"/>
    <property type="project" value="UniProtKB"/>
</dbReference>
<dbReference type="GO" id="GO:0001778">
    <property type="term" value="P:plasma membrane repair"/>
    <property type="evidence" value="ECO:0000314"/>
    <property type="project" value="ComplexPortal"/>
</dbReference>
<dbReference type="GO" id="GO:0071168">
    <property type="term" value="P:protein localization to chromatin"/>
    <property type="evidence" value="ECO:0000315"/>
    <property type="project" value="ARUK-UCL"/>
</dbReference>
<dbReference type="GO" id="GO:0015031">
    <property type="term" value="P:protein transport"/>
    <property type="evidence" value="ECO:0007669"/>
    <property type="project" value="UniProtKB-KW"/>
</dbReference>
<dbReference type="GO" id="GO:1901673">
    <property type="term" value="P:regulation of mitotic spindle assembly"/>
    <property type="evidence" value="ECO:0000315"/>
    <property type="project" value="ComplexPortal"/>
</dbReference>
<dbReference type="GO" id="GO:0043162">
    <property type="term" value="P:ubiquitin-dependent protein catabolic process via the multivesicular body sorting pathway"/>
    <property type="evidence" value="ECO:0000314"/>
    <property type="project" value="ComplexPortal"/>
</dbReference>
<dbReference type="GO" id="GO:0006900">
    <property type="term" value="P:vesicle budding from membrane"/>
    <property type="evidence" value="ECO:0000318"/>
    <property type="project" value="GO_Central"/>
</dbReference>
<dbReference type="GO" id="GO:0051469">
    <property type="term" value="P:vesicle fusion with vacuole"/>
    <property type="evidence" value="ECO:0000303"/>
    <property type="project" value="ComplexPortal"/>
</dbReference>
<dbReference type="GO" id="GO:0046761">
    <property type="term" value="P:viral budding from plasma membrane"/>
    <property type="evidence" value="ECO:0000314"/>
    <property type="project" value="ComplexPortal"/>
</dbReference>
<dbReference type="GO" id="GO:0039702">
    <property type="term" value="P:viral budding via host ESCRT complex"/>
    <property type="evidence" value="ECO:0000314"/>
    <property type="project" value="ComplexPortal"/>
</dbReference>
<dbReference type="FunFam" id="1.10.287.1060:FF:000007">
    <property type="entry name" value="Charged multivesicular body protein 7"/>
    <property type="match status" value="1"/>
</dbReference>
<dbReference type="Gene3D" id="6.10.250.1710">
    <property type="match status" value="1"/>
</dbReference>
<dbReference type="Gene3D" id="1.10.287.1060">
    <property type="entry name" value="ESAT-6-like"/>
    <property type="match status" value="1"/>
</dbReference>
<dbReference type="InterPro" id="IPR005024">
    <property type="entry name" value="Snf7_fam"/>
</dbReference>
<dbReference type="PANTHER" id="PTHR22761">
    <property type="entry name" value="CHARGED MULTIVESICULAR BODY PROTEIN"/>
    <property type="match status" value="1"/>
</dbReference>
<dbReference type="PANTHER" id="PTHR22761:SF21">
    <property type="entry name" value="CHARGED MULTIVESICULAR BODY PROTEIN 7"/>
    <property type="match status" value="1"/>
</dbReference>
<dbReference type="Pfam" id="PF03357">
    <property type="entry name" value="Snf7"/>
    <property type="match status" value="1"/>
</dbReference>
<dbReference type="Pfam" id="PF25239">
    <property type="entry name" value="WHD_CHMP7"/>
    <property type="match status" value="1"/>
</dbReference>
<gene>
    <name type="primary">CHMP7</name>
</gene>
<evidence type="ECO:0000250" key="1">
    <source>
        <dbReference type="UniProtKB" id="Q8R1T1"/>
    </source>
</evidence>
<evidence type="ECO:0000255" key="2"/>
<evidence type="ECO:0000256" key="3">
    <source>
        <dbReference type="SAM" id="MobiDB-lite"/>
    </source>
</evidence>
<evidence type="ECO:0000269" key="4">
    <source>
    </source>
</evidence>
<evidence type="ECO:0000269" key="5">
    <source>
    </source>
</evidence>
<evidence type="ECO:0000269" key="6">
    <source>
    </source>
</evidence>
<evidence type="ECO:0000303" key="7">
    <source>
    </source>
</evidence>
<evidence type="ECO:0000305" key="8"/>
<evidence type="ECO:0007744" key="9">
    <source>
    </source>
</evidence>
<evidence type="ECO:0007744" key="10">
    <source>
    </source>
</evidence>
<evidence type="ECO:0007744" key="11">
    <source>
    </source>
</evidence>
<evidence type="ECO:0007744" key="12">
    <source>
    </source>
</evidence>
<evidence type="ECO:0007744" key="13">
    <source>
    </source>
</evidence>
<accession>Q8WUX9</accession>
<accession>B2RDT3</accession>
<accession>B4DKJ6</accession>
<accession>D3DSS1</accession>
<accession>Q8NDM1</accession>
<accession>Q9BT50</accession>
<name>CHMP7_HUMAN</name>
<protein>
    <recommendedName>
        <fullName>Charged multivesicular body protein 7</fullName>
    </recommendedName>
    <alternativeName>
        <fullName>Chromatin-modifying protein 7</fullName>
    </alternativeName>
</protein>
<organism>
    <name type="scientific">Homo sapiens</name>
    <name type="common">Human</name>
    <dbReference type="NCBI Taxonomy" id="9606"/>
    <lineage>
        <taxon>Eukaryota</taxon>
        <taxon>Metazoa</taxon>
        <taxon>Chordata</taxon>
        <taxon>Craniata</taxon>
        <taxon>Vertebrata</taxon>
        <taxon>Euteleostomi</taxon>
        <taxon>Mammalia</taxon>
        <taxon>Eutheria</taxon>
        <taxon>Euarchontoglires</taxon>
        <taxon>Primates</taxon>
        <taxon>Haplorrhini</taxon>
        <taxon>Catarrhini</taxon>
        <taxon>Hominidae</taxon>
        <taxon>Homo</taxon>
    </lineage>
</organism>
<feature type="chain" id="PRO_0000211516" description="Charged multivesicular body protein 7">
    <location>
        <begin position="1"/>
        <end position="453"/>
    </location>
</feature>
<feature type="region of interest" description="Disordered" evidence="3">
    <location>
        <begin position="1"/>
        <end position="22"/>
    </location>
</feature>
<feature type="region of interest" description="Disordered" evidence="3">
    <location>
        <begin position="392"/>
        <end position="417"/>
    </location>
</feature>
<feature type="region of interest" description="Disordered" evidence="3">
    <location>
        <begin position="431"/>
        <end position="453"/>
    </location>
</feature>
<feature type="coiled-coil region" evidence="2">
    <location>
        <begin position="243"/>
        <end position="312"/>
    </location>
</feature>
<feature type="compositionally biased region" description="Low complexity" evidence="3">
    <location>
        <begin position="10"/>
        <end position="22"/>
    </location>
</feature>
<feature type="compositionally biased region" description="Basic and acidic residues" evidence="3">
    <location>
        <begin position="392"/>
        <end position="403"/>
    </location>
</feature>
<feature type="modified residue" description="Phosphoserine" evidence="1">
    <location>
        <position position="232"/>
    </location>
</feature>
<feature type="modified residue" description="Phosphothreonine" evidence="13">
    <location>
        <position position="408"/>
    </location>
</feature>
<feature type="modified residue" description="Phosphoserine" evidence="13">
    <location>
        <position position="410"/>
    </location>
</feature>
<feature type="modified residue" description="Phosphoserine" evidence="9 10 11 12 13">
    <location>
        <position position="417"/>
    </location>
</feature>
<feature type="modified residue" description="Phosphoserine" evidence="13">
    <location>
        <position position="431"/>
    </location>
</feature>
<feature type="modified residue" description="Phosphoserine" evidence="13">
    <location>
        <position position="441"/>
    </location>
</feature>
<feature type="splice variant" id="VSP_056945" description="In isoform 2." evidence="7">
    <original>RGELQRESDFMASVDSSWISWGVGVFLLKPLKWTLSNMLGDNKVPAEEVLVAVELLKEKAEE</original>
    <variation>KRLRRCIVCIRTRPSPPTPWWPCQSSAPSVLTPAQMRGPSTWCCCSCRRRRGSQSSSRTGRR</variation>
    <location>
        <begin position="101"/>
        <end position="162"/>
    </location>
</feature>
<feature type="splice variant" id="VSP_056946" description="In isoform 2." evidence="7">
    <location>
        <begin position="163"/>
        <end position="452"/>
    </location>
</feature>
<feature type="sequence conflict" description="In Ref. 2; CAD38703." evidence="8" ref="2">
    <original>GG</original>
    <variation>E</variation>
    <location>
        <begin position="433"/>
        <end position="434"/>
    </location>
</feature>
<feature type="sequence conflict" description="In Ref. 2; CAD38703." evidence="8" ref="2">
    <original>KSP</original>
    <variation>NLQ</variation>
    <location>
        <begin position="440"/>
        <end position="442"/>
    </location>
</feature>